<proteinExistence type="inferred from homology"/>
<dbReference type="EC" id="1.14.99.48" evidence="1"/>
<dbReference type="EMBL" id="AJ938182">
    <property type="protein sequence ID" value="CAI80688.1"/>
    <property type="molecule type" value="Genomic_DNA"/>
</dbReference>
<dbReference type="RefSeq" id="WP_000670950.1">
    <property type="nucleotide sequence ID" value="NC_007622.1"/>
</dbReference>
<dbReference type="SMR" id="Q2YX89"/>
<dbReference type="KEGG" id="sab:SAB1000"/>
<dbReference type="HOGENOM" id="CLU_141544_2_1_9"/>
<dbReference type="GO" id="GO:0005737">
    <property type="term" value="C:cytoplasm"/>
    <property type="evidence" value="ECO:0007669"/>
    <property type="project" value="UniProtKB-SubCell"/>
</dbReference>
<dbReference type="GO" id="GO:0020037">
    <property type="term" value="F:heme binding"/>
    <property type="evidence" value="ECO:0007669"/>
    <property type="project" value="UniProtKB-UniRule"/>
</dbReference>
<dbReference type="GO" id="GO:0004392">
    <property type="term" value="F:heme oxygenase (decyclizing) activity"/>
    <property type="evidence" value="ECO:0007669"/>
    <property type="project" value="UniProtKB-UniRule"/>
</dbReference>
<dbReference type="GO" id="GO:0005506">
    <property type="term" value="F:iron ion binding"/>
    <property type="evidence" value="ECO:0007669"/>
    <property type="project" value="UniProtKB-UniRule"/>
</dbReference>
<dbReference type="GO" id="GO:0042167">
    <property type="term" value="P:heme catabolic process"/>
    <property type="evidence" value="ECO:0007669"/>
    <property type="project" value="UniProtKB-UniRule"/>
</dbReference>
<dbReference type="GO" id="GO:0033212">
    <property type="term" value="P:iron import into cell"/>
    <property type="evidence" value="ECO:0007669"/>
    <property type="project" value="InterPro"/>
</dbReference>
<dbReference type="Gene3D" id="3.30.70.100">
    <property type="match status" value="1"/>
</dbReference>
<dbReference type="HAMAP" id="MF_01272">
    <property type="entry name" value="Heme_degrading_monooxygenase"/>
    <property type="match status" value="1"/>
</dbReference>
<dbReference type="InterPro" id="IPR007138">
    <property type="entry name" value="ABM_dom"/>
</dbReference>
<dbReference type="InterPro" id="IPR011008">
    <property type="entry name" value="Dimeric_a/b-barrel"/>
</dbReference>
<dbReference type="InterPro" id="IPR050404">
    <property type="entry name" value="Heme-degrading_MO"/>
</dbReference>
<dbReference type="InterPro" id="IPR023953">
    <property type="entry name" value="IsdG"/>
</dbReference>
<dbReference type="NCBIfam" id="NF009837">
    <property type="entry name" value="PRK13312.1"/>
    <property type="match status" value="1"/>
</dbReference>
<dbReference type="PANTHER" id="PTHR34474:SF4">
    <property type="entry name" value="HEME OXYGENASE (STAPHYLOBILIN-PRODUCING) 1"/>
    <property type="match status" value="1"/>
</dbReference>
<dbReference type="PANTHER" id="PTHR34474">
    <property type="entry name" value="SIGNAL TRANSDUCTION PROTEIN TRAP"/>
    <property type="match status" value="1"/>
</dbReference>
<dbReference type="Pfam" id="PF03992">
    <property type="entry name" value="ABM"/>
    <property type="match status" value="1"/>
</dbReference>
<dbReference type="SUPFAM" id="SSF54909">
    <property type="entry name" value="Dimeric alpha+beta barrel"/>
    <property type="match status" value="1"/>
</dbReference>
<dbReference type="PROSITE" id="PS51725">
    <property type="entry name" value="ABM"/>
    <property type="match status" value="1"/>
</dbReference>
<name>HDOX_STAAB</name>
<evidence type="ECO:0000255" key="1">
    <source>
        <dbReference type="HAMAP-Rule" id="MF_01272"/>
    </source>
</evidence>
<protein>
    <recommendedName>
        <fullName evidence="1">Heme oxygenase (staphylobilin-producing)</fullName>
        <ecNumber evidence="1">1.14.99.48</ecNumber>
    </recommendedName>
    <alternativeName>
        <fullName evidence="1">Heme-degrading monooxygenase</fullName>
    </alternativeName>
    <alternativeName>
        <fullName evidence="1">Iron-regulated surface determinant</fullName>
    </alternativeName>
    <alternativeName>
        <fullName evidence="1">Iron-responsive surface determinant</fullName>
    </alternativeName>
</protein>
<organism>
    <name type="scientific">Staphylococcus aureus (strain bovine RF122 / ET3-1)</name>
    <dbReference type="NCBI Taxonomy" id="273036"/>
    <lineage>
        <taxon>Bacteria</taxon>
        <taxon>Bacillati</taxon>
        <taxon>Bacillota</taxon>
        <taxon>Bacilli</taxon>
        <taxon>Bacillales</taxon>
        <taxon>Staphylococcaceae</taxon>
        <taxon>Staphylococcus</taxon>
    </lineage>
</organism>
<accession>Q2YX89</accession>
<feature type="chain" id="PRO_0000270080" description="Heme oxygenase (staphylobilin-producing)">
    <location>
        <begin position="1"/>
        <end position="107"/>
    </location>
</feature>
<feature type="domain" description="ABM" evidence="1">
    <location>
        <begin position="3"/>
        <end position="92"/>
    </location>
</feature>
<feature type="binding site" evidence="1">
    <location>
        <position position="7"/>
    </location>
    <ligand>
        <name>Fe cation</name>
        <dbReference type="ChEBI" id="CHEBI:24875"/>
    </ligand>
</feature>
<feature type="binding site" evidence="1">
    <location>
        <begin position="22"/>
        <end position="29"/>
    </location>
    <ligand>
        <name>heme</name>
        <dbReference type="ChEBI" id="CHEBI:30413"/>
    </ligand>
</feature>
<feature type="binding site" description="axial binding residue" evidence="1">
    <location>
        <position position="77"/>
    </location>
    <ligand>
        <name>heme</name>
        <dbReference type="ChEBI" id="CHEBI:30413"/>
    </ligand>
    <ligandPart>
        <name>Fe</name>
        <dbReference type="ChEBI" id="CHEBI:18248"/>
    </ligandPart>
</feature>
<feature type="site" description="Transition state stabilizer" evidence="1">
    <location>
        <position position="67"/>
    </location>
</feature>
<comment type="function">
    <text evidence="1">Allows bacterial pathogens to use the host heme as an iron source. Catalyzes the oxidative degradation of the heme macrocyclic porphyrin ring to the oxo-bilirubin chromophore staphylobilin (a mixture of the linear tetrapyrroles 5-oxo-delta-bilirubin and 15-oxo-beta-bilirubin) in the presence of a suitable electron donor such as ascorbate or NADPH--cytochrome P450 reductase, with subsequent release of free iron.</text>
</comment>
<comment type="catalytic activity">
    <reaction evidence="1">
        <text>heme b + 5 AH2 + 4 O2 + 2 H(+) = delta-staphylobilin + Fe(2+) + formaldehyde + 5 A + 4 H2O</text>
        <dbReference type="Rhea" id="RHEA:37039"/>
        <dbReference type="ChEBI" id="CHEBI:13193"/>
        <dbReference type="ChEBI" id="CHEBI:15377"/>
        <dbReference type="ChEBI" id="CHEBI:15378"/>
        <dbReference type="ChEBI" id="CHEBI:15379"/>
        <dbReference type="ChEBI" id="CHEBI:16842"/>
        <dbReference type="ChEBI" id="CHEBI:17499"/>
        <dbReference type="ChEBI" id="CHEBI:29033"/>
        <dbReference type="ChEBI" id="CHEBI:60344"/>
        <dbReference type="ChEBI" id="CHEBI:74361"/>
        <dbReference type="EC" id="1.14.99.48"/>
    </reaction>
</comment>
<comment type="catalytic activity">
    <reaction evidence="1">
        <text>heme b + 5 AH2 + 4 O2 + 2 H(+) = beta-staphylobilin + Fe(2+) + formaldehyde + 5 A + 4 H2O</text>
        <dbReference type="Rhea" id="RHEA:37363"/>
        <dbReference type="ChEBI" id="CHEBI:13193"/>
        <dbReference type="ChEBI" id="CHEBI:15377"/>
        <dbReference type="ChEBI" id="CHEBI:15378"/>
        <dbReference type="ChEBI" id="CHEBI:15379"/>
        <dbReference type="ChEBI" id="CHEBI:16842"/>
        <dbReference type="ChEBI" id="CHEBI:17499"/>
        <dbReference type="ChEBI" id="CHEBI:29033"/>
        <dbReference type="ChEBI" id="CHEBI:60344"/>
        <dbReference type="ChEBI" id="CHEBI:74362"/>
        <dbReference type="EC" id="1.14.99.48"/>
    </reaction>
</comment>
<comment type="subunit">
    <text evidence="1">Homodimer.</text>
</comment>
<comment type="subcellular location">
    <subcellularLocation>
        <location evidence="1">Cytoplasm</location>
    </subcellularLocation>
</comment>
<comment type="similarity">
    <text evidence="1">Belongs to the antibiotic biosynthesis monooxygenase family. Heme-degrading monooxygenase IsdG subfamily.</text>
</comment>
<gene>
    <name type="primary">isdG</name>
    <name type="ordered locus">SAB1000</name>
</gene>
<sequence length="107" mass="12546">MKFMAENRLTLTKGTAKDIIERFYTRHGIETLEGFDGMFVTQTLEQEDFDEVKILTVWKSKQAFTDWLKSDVFKAAHKHVRSKNEDESSPIINNKVITYDIGYSYMK</sequence>
<reference key="1">
    <citation type="journal article" date="2007" name="PLoS ONE">
        <title>Molecular correlates of host specialization in Staphylococcus aureus.</title>
        <authorList>
            <person name="Herron-Olson L."/>
            <person name="Fitzgerald J.R."/>
            <person name="Musser J.M."/>
            <person name="Kapur V."/>
        </authorList>
    </citation>
    <scope>NUCLEOTIDE SEQUENCE [LARGE SCALE GENOMIC DNA]</scope>
    <source>
        <strain>bovine RF122 / ET3-1</strain>
    </source>
</reference>
<keyword id="KW-0963">Cytoplasm</keyword>
<keyword id="KW-0349">Heme</keyword>
<keyword id="KW-0408">Iron</keyword>
<keyword id="KW-0479">Metal-binding</keyword>
<keyword id="KW-0503">Monooxygenase</keyword>
<keyword id="KW-0560">Oxidoreductase</keyword>